<reference key="1">
    <citation type="journal article" date="2010" name="J. Bacteriol.">
        <title>Complete genome sequence of Methanothermobacter marburgensis, a methanoarchaeon model organism.</title>
        <authorList>
            <person name="Liesegang H."/>
            <person name="Kaster A.K."/>
            <person name="Wiezer A."/>
            <person name="Goenrich M."/>
            <person name="Wollherr A."/>
            <person name="Seedorf H."/>
            <person name="Gottschalk G."/>
            <person name="Thauer R.K."/>
        </authorList>
    </citation>
    <scope>NUCLEOTIDE SEQUENCE [LARGE SCALE GENOMIC DNA]</scope>
    <source>
        <strain>ATCC BAA-927 / DSM 2133 / JCM 14651 / NBRC 100331 / OCM 82 / Marburg</strain>
    </source>
</reference>
<reference key="2">
    <citation type="journal article" date="1997" name="Eur. J. Biochem.">
        <title>Structures and functions of four anabolic 2-oxoacid oxidoreductases in Methanobacterium thermoautotrophicum.</title>
        <authorList>
            <person name="Tersteegen A."/>
            <person name="Linder D."/>
            <person name="Thauer R.K."/>
            <person name="Hedderich R."/>
        </authorList>
    </citation>
    <scope>PROTEIN SEQUENCE OF 2-16</scope>
    <scope>BIOPHYSICOCHEMICAL PROPERTIES</scope>
    <scope>SUBUNIT</scope>
    <source>
        <strain>ATCC BAA-927 / DSM 2133 / JCM 14651 / NBRC 100331 / OCM 82 / Marburg</strain>
    </source>
</reference>
<feature type="initiator methionine" description="Removed" evidence="1">
    <location>
        <position position="1"/>
    </location>
</feature>
<feature type="chain" id="PRO_0000099950" description="Ketoisovalerate oxidoreductase subunit VorA">
    <location>
        <begin position="2"/>
        <end position="478"/>
    </location>
</feature>
<protein>
    <recommendedName>
        <fullName>Ketoisovalerate oxidoreductase subunit VorA</fullName>
        <shortName>VOR</shortName>
        <ecNumber>1.-.-.-</ecNumber>
    </recommendedName>
    <alternativeName>
        <fullName>2-oxoisovalerate oxidoreductase alpha chain</fullName>
    </alternativeName>
    <alternativeName>
        <fullName>2-oxoisovalerate-ferredoxin oxidoreductase subunit alpha</fullName>
    </alternativeName>
</protein>
<proteinExistence type="evidence at protein level"/>
<evidence type="ECO:0000269" key="1">
    <source>
    </source>
</evidence>
<evidence type="ECO:0000305" key="2"/>
<keyword id="KW-0903">Direct protein sequencing</keyword>
<keyword id="KW-0560">Oxidoreductase</keyword>
<organism>
    <name type="scientific">Methanothermobacter marburgensis (strain ATCC BAA-927 / DSM 2133 / JCM 14651 / NBRC 100331 / OCM 82 / Marburg)</name>
    <name type="common">Methanobacterium thermoautotrophicum</name>
    <dbReference type="NCBI Taxonomy" id="79929"/>
    <lineage>
        <taxon>Archaea</taxon>
        <taxon>Methanobacteriati</taxon>
        <taxon>Methanobacteriota</taxon>
        <taxon>Methanomada group</taxon>
        <taxon>Methanobacteria</taxon>
        <taxon>Methanobacteriales</taxon>
        <taxon>Methanobacteriaceae</taxon>
        <taxon>Methanothermobacter</taxon>
    </lineage>
</organism>
<sequence>MTKKVIRKPDSLHEVFERKGGSAPTATHYCAGCGHGILHKLIGEAIDELGIQERSVMISPVGCAVFAYYYFDCGNVQVAHGRAPAVGTGISRAEDTPVVLLYQGDGDLASIGLNETIQAANRGEKMAVFFVNNTVYGMTGGQMAPTTLIGEVTVTCPGGRDPRYAGYPLHMCELLDNLQAPVFIERVSLADPKSIRKAKRAVKRALEIQRDGKGYAFVEVLSPCPTNLRQDAEGAERFLKEEMEREFPVKNFRDRSSETEPLIRSESDFSRESLDRIFQIKEDSVPDPVDDPEFREVRVKIAGFGGQGVLSMGLTLAQAACSEGRHTSWYPAYGPEQRGGTSSCGVVISGERVGSPAVDTPDVLVAFNQPSLDEFAGDVREGGIVLYDTATADFSKKENLRAIGVPALEIAKEHGTGRAANTAMLGVMMALGITGLDEESFRDAIRFTFSGKDKIIDINLKILEAGADWARKNLEGEF</sequence>
<comment type="biophysicochemical properties">
    <phDependence>
        <text evidence="1">Optimum pH is 9.7.</text>
    </phDependence>
    <temperatureDependence>
        <text evidence="1">Optimum temperature is 75 degrees Celsius.</text>
    </temperatureDependence>
</comment>
<comment type="subunit">
    <text evidence="1">Heterotrimer of the VorA, VorB and VorC subunits.</text>
</comment>
<comment type="sequence caution" evidence="2">
    <conflict type="erroneous termination">
        <sequence resource="EMBL-CDS" id="ADL58686"/>
    </conflict>
    <text>Truncated C-terminus.</text>
</comment>
<comment type="sequence caution" evidence="2">
    <conflict type="erroneous initiation">
        <sequence resource="EMBL-CDS" id="ADL58687"/>
    </conflict>
    <text>Truncated N-terminus.</text>
</comment>
<dbReference type="EC" id="1.-.-.-"/>
<dbReference type="EMBL" id="CP001710">
    <property type="protein sequence ID" value="ADL58686.1"/>
    <property type="status" value="ALT_SEQ"/>
    <property type="molecule type" value="Genomic_DNA"/>
</dbReference>
<dbReference type="EMBL" id="CP001710">
    <property type="protein sequence ID" value="ADL58687.1"/>
    <property type="status" value="ALT_INIT"/>
    <property type="molecule type" value="Genomic_DNA"/>
</dbReference>
<dbReference type="SMR" id="P80907"/>
<dbReference type="STRING" id="79929.MTBMA_c10930"/>
<dbReference type="PaxDb" id="79929-MTBMA_c10930"/>
<dbReference type="KEGG" id="mmg:MTBMA_c10920"/>
<dbReference type="KEGG" id="mmg:MTBMA_c10930"/>
<dbReference type="PATRIC" id="fig|79929.8.peg.1070"/>
<dbReference type="HOGENOM" id="CLU_2392937_0_0_2"/>
<dbReference type="Proteomes" id="UP000000345">
    <property type="component" value="Chromosome"/>
</dbReference>
<dbReference type="GO" id="GO:0016625">
    <property type="term" value="F:oxidoreductase activity, acting on the aldehyde or oxo group of donors, iron-sulfur protein as acceptor"/>
    <property type="evidence" value="ECO:0007669"/>
    <property type="project" value="UniProtKB-ARBA"/>
</dbReference>
<dbReference type="GO" id="GO:0030976">
    <property type="term" value="F:thiamine pyrophosphate binding"/>
    <property type="evidence" value="ECO:0007669"/>
    <property type="project" value="InterPro"/>
</dbReference>
<dbReference type="GO" id="GO:0006082">
    <property type="term" value="P:organic acid metabolic process"/>
    <property type="evidence" value="ECO:0007669"/>
    <property type="project" value="UniProtKB-ARBA"/>
</dbReference>
<dbReference type="GO" id="GO:0044272">
    <property type="term" value="P:sulfur compound biosynthetic process"/>
    <property type="evidence" value="ECO:0007669"/>
    <property type="project" value="UniProtKB-ARBA"/>
</dbReference>
<dbReference type="CDD" id="cd03375">
    <property type="entry name" value="TPP_OGFOR"/>
    <property type="match status" value="1"/>
</dbReference>
<dbReference type="Gene3D" id="3.40.50.970">
    <property type="match status" value="1"/>
</dbReference>
<dbReference type="Gene3D" id="3.40.920.10">
    <property type="entry name" value="Pyruvate-ferredoxin oxidoreductase, PFOR, domain III"/>
    <property type="match status" value="1"/>
</dbReference>
<dbReference type="InterPro" id="IPR051457">
    <property type="entry name" value="2-oxoacid:Fd_oxidoreductase"/>
</dbReference>
<dbReference type="InterPro" id="IPR019752">
    <property type="entry name" value="Pyrv/ketoisovalerate_OxRed_cat"/>
</dbReference>
<dbReference type="InterPro" id="IPR002869">
    <property type="entry name" value="Pyrv_flavodox_OxRed_cen"/>
</dbReference>
<dbReference type="InterPro" id="IPR029061">
    <property type="entry name" value="THDP-binding"/>
</dbReference>
<dbReference type="InterPro" id="IPR011766">
    <property type="entry name" value="TPP_enzyme_TPP-bd"/>
</dbReference>
<dbReference type="PANTHER" id="PTHR48084">
    <property type="entry name" value="2-OXOGLUTARATE OXIDOREDUCTASE SUBUNIT KORB-RELATED"/>
    <property type="match status" value="1"/>
</dbReference>
<dbReference type="PANTHER" id="PTHR48084:SF3">
    <property type="entry name" value="SUBUNIT OF PYRUVATE:FLAVODOXIN OXIDOREDUCTASE"/>
    <property type="match status" value="1"/>
</dbReference>
<dbReference type="Pfam" id="PF01558">
    <property type="entry name" value="POR"/>
    <property type="match status" value="1"/>
</dbReference>
<dbReference type="Pfam" id="PF02775">
    <property type="entry name" value="TPP_enzyme_C"/>
    <property type="match status" value="1"/>
</dbReference>
<dbReference type="SUPFAM" id="SSF53323">
    <property type="entry name" value="Pyruvate-ferredoxin oxidoreductase, PFOR, domain III"/>
    <property type="match status" value="1"/>
</dbReference>
<dbReference type="SUPFAM" id="SSF52518">
    <property type="entry name" value="Thiamin diphosphate-binding fold (THDP-binding)"/>
    <property type="match status" value="1"/>
</dbReference>
<name>VORA_METTM</name>
<gene>
    <name type="primary">vorA</name>
    <name type="ordered locus">MTBMA_c10920/MTBMA_c10930</name>
</gene>
<accession>P80907</accession>
<accession>D9PWT8</accession>
<accession>D9PWT9</accession>